<comment type="function">
    <text evidence="2">Component of the ubiquinol-cytochrome c reductase complex (complex III or cytochrome b-c1 complex) that is part of the mitochondrial respiratory chain. The b-c1 complex mediates electron transfer from ubiquinol to cytochrome c. Contributes to the generation of a proton gradient across the mitochondrial membrane that is then used for ATP synthesis.</text>
</comment>
<comment type="cofactor">
    <cofactor evidence="2">
        <name>heme b</name>
        <dbReference type="ChEBI" id="CHEBI:60344"/>
    </cofactor>
    <text evidence="2">Binds 2 heme b groups non-covalently.</text>
</comment>
<comment type="subunit">
    <text evidence="2">The cytochrome bc1 complex contains 11 subunits: 3 respiratory subunits (MT-CYB, CYC1 and UQCRFS1), 2 core proteins (UQCRC1 and UQCRC2) and 6 low-molecular weight proteins (UQCRH/QCR6, UQCRB/QCR7, UQCRQ/QCR8, UQCR10/QCR9, UQCR11/QCR10 and a cleavage product of UQCRFS1). This cytochrome bc1 complex then forms a dimer.</text>
</comment>
<comment type="subcellular location">
    <subcellularLocation>
        <location evidence="2">Mitochondrion inner membrane</location>
        <topology evidence="2">Multi-pass membrane protein</topology>
    </subcellularLocation>
</comment>
<comment type="miscellaneous">
    <text evidence="1">Heme 1 (or BL or b562) is low-potential and absorbs at about 562 nm, and heme 2 (or BH or b566) is high-potential and absorbs at about 566 nm.</text>
</comment>
<comment type="similarity">
    <text evidence="3 4">Belongs to the cytochrome b family.</text>
</comment>
<comment type="caution">
    <text evidence="2">The full-length protein contains only eight transmembrane helices, not nine as predicted by bioinformatics tools.</text>
</comment>
<reference key="1">
    <citation type="journal article" date="1994" name="Proc. R. Soc. B">
        <title>Molecular evolution of the family Camelidae: a mitochondrial DNA study.</title>
        <authorList>
            <person name="Stanley H.F."/>
            <person name="Kadwell M."/>
            <person name="Wheeler J.C."/>
        </authorList>
    </citation>
    <scope>NUCLEOTIDE SEQUENCE [GENOMIC DNA]</scope>
</reference>
<organism>
    <name type="scientific">Lama guanicoe</name>
    <name type="common">Guanaco</name>
    <name type="synonym">Lama glama guanicoe</name>
    <dbReference type="NCBI Taxonomy" id="9840"/>
    <lineage>
        <taxon>Eukaryota</taxon>
        <taxon>Metazoa</taxon>
        <taxon>Chordata</taxon>
        <taxon>Craniata</taxon>
        <taxon>Vertebrata</taxon>
        <taxon>Euteleostomi</taxon>
        <taxon>Mammalia</taxon>
        <taxon>Eutheria</taxon>
        <taxon>Laurasiatheria</taxon>
        <taxon>Artiodactyla</taxon>
        <taxon>Tylopoda</taxon>
        <taxon>Camelidae</taxon>
        <taxon>Lama</taxon>
    </lineage>
</organism>
<evidence type="ECO:0000250" key="1"/>
<evidence type="ECO:0000250" key="2">
    <source>
        <dbReference type="UniProtKB" id="P00157"/>
    </source>
</evidence>
<evidence type="ECO:0000255" key="3">
    <source>
        <dbReference type="PROSITE-ProRule" id="PRU00967"/>
    </source>
</evidence>
<evidence type="ECO:0000255" key="4">
    <source>
        <dbReference type="PROSITE-ProRule" id="PRU00968"/>
    </source>
</evidence>
<keyword id="KW-0249">Electron transport</keyword>
<keyword id="KW-0349">Heme</keyword>
<keyword id="KW-0408">Iron</keyword>
<keyword id="KW-0472">Membrane</keyword>
<keyword id="KW-0479">Metal-binding</keyword>
<keyword id="KW-0496">Mitochondrion</keyword>
<keyword id="KW-0999">Mitochondrion inner membrane</keyword>
<keyword id="KW-0679">Respiratory chain</keyword>
<keyword id="KW-0812">Transmembrane</keyword>
<keyword id="KW-1133">Transmembrane helix</keyword>
<keyword id="KW-0813">Transport</keyword>
<keyword id="KW-0830">Ubiquinone</keyword>
<geneLocation type="mitochondrion"/>
<name>CYB_LAMGU</name>
<proteinExistence type="inferred from homology"/>
<accession>Q34890</accession>
<sequence>MTNIRKSHPLLKIVNNAFIDLPAPSNISSWWNFGSLLGICLIMQIMTGLFLAMHYTSDTATAFSSVAHICRDVNYGWIIRYLHANGASMFFICLYIHVGRGLYYGSYAFLETWNIGIILLFTVMATAFMGYVLPWGQMSFWGATVITNLLSAIPYVGTTLVEWIWGGFSVDKATLTRFFAFHFILPFVIAALAGVHLLFLHETGSNNPTGISSDMDKIPFHPYYTIKDILGVLLLILTLLLLVLFSPDLLGDPDNYTPANPLNTPPHIKPEWYFLFAYAILRSIPNKLGGVLALVLSILILALIPLLHTSKQRSMMFRPISQCLFWTLVADLLTLTWIGGQPVEPPFIMIGQVASILYFSLILILMPVAGIIENHILKW</sequence>
<dbReference type="EMBL" id="U06428">
    <property type="protein sequence ID" value="AAA21486.1"/>
    <property type="molecule type" value="Genomic_DNA"/>
</dbReference>
<dbReference type="RefSeq" id="YP_002456371.1">
    <property type="nucleotide sequence ID" value="NC_011822.1"/>
</dbReference>
<dbReference type="SMR" id="Q34890"/>
<dbReference type="GeneID" id="7256481"/>
<dbReference type="CTD" id="4519"/>
<dbReference type="GO" id="GO:0005743">
    <property type="term" value="C:mitochondrial inner membrane"/>
    <property type="evidence" value="ECO:0007669"/>
    <property type="project" value="UniProtKB-SubCell"/>
</dbReference>
<dbReference type="GO" id="GO:0045275">
    <property type="term" value="C:respiratory chain complex III"/>
    <property type="evidence" value="ECO:0007669"/>
    <property type="project" value="InterPro"/>
</dbReference>
<dbReference type="GO" id="GO:0046872">
    <property type="term" value="F:metal ion binding"/>
    <property type="evidence" value="ECO:0007669"/>
    <property type="project" value="UniProtKB-KW"/>
</dbReference>
<dbReference type="GO" id="GO:0008121">
    <property type="term" value="F:ubiquinol-cytochrome-c reductase activity"/>
    <property type="evidence" value="ECO:0007669"/>
    <property type="project" value="InterPro"/>
</dbReference>
<dbReference type="GO" id="GO:0006122">
    <property type="term" value="P:mitochondrial electron transport, ubiquinol to cytochrome c"/>
    <property type="evidence" value="ECO:0007669"/>
    <property type="project" value="TreeGrafter"/>
</dbReference>
<dbReference type="CDD" id="cd00290">
    <property type="entry name" value="cytochrome_b_C"/>
    <property type="match status" value="1"/>
</dbReference>
<dbReference type="CDD" id="cd00284">
    <property type="entry name" value="Cytochrome_b_N"/>
    <property type="match status" value="1"/>
</dbReference>
<dbReference type="FunFam" id="1.20.810.10:FF:000002">
    <property type="entry name" value="Cytochrome b"/>
    <property type="match status" value="1"/>
</dbReference>
<dbReference type="Gene3D" id="1.20.810.10">
    <property type="entry name" value="Cytochrome Bc1 Complex, Chain C"/>
    <property type="match status" value="1"/>
</dbReference>
<dbReference type="InterPro" id="IPR005798">
    <property type="entry name" value="Cyt_b/b6_C"/>
</dbReference>
<dbReference type="InterPro" id="IPR036150">
    <property type="entry name" value="Cyt_b/b6_C_sf"/>
</dbReference>
<dbReference type="InterPro" id="IPR005797">
    <property type="entry name" value="Cyt_b/b6_N"/>
</dbReference>
<dbReference type="InterPro" id="IPR027387">
    <property type="entry name" value="Cytb/b6-like_sf"/>
</dbReference>
<dbReference type="InterPro" id="IPR030689">
    <property type="entry name" value="Cytochrome_b"/>
</dbReference>
<dbReference type="InterPro" id="IPR048260">
    <property type="entry name" value="Cytochrome_b_C_euk/bac"/>
</dbReference>
<dbReference type="InterPro" id="IPR048259">
    <property type="entry name" value="Cytochrome_b_N_euk/bac"/>
</dbReference>
<dbReference type="InterPro" id="IPR016174">
    <property type="entry name" value="Di-haem_cyt_TM"/>
</dbReference>
<dbReference type="PANTHER" id="PTHR19271">
    <property type="entry name" value="CYTOCHROME B"/>
    <property type="match status" value="1"/>
</dbReference>
<dbReference type="PANTHER" id="PTHR19271:SF16">
    <property type="entry name" value="CYTOCHROME B"/>
    <property type="match status" value="1"/>
</dbReference>
<dbReference type="Pfam" id="PF00032">
    <property type="entry name" value="Cytochrom_B_C"/>
    <property type="match status" value="1"/>
</dbReference>
<dbReference type="Pfam" id="PF00033">
    <property type="entry name" value="Cytochrome_B"/>
    <property type="match status" value="1"/>
</dbReference>
<dbReference type="PIRSF" id="PIRSF038885">
    <property type="entry name" value="COB"/>
    <property type="match status" value="1"/>
</dbReference>
<dbReference type="SUPFAM" id="SSF81648">
    <property type="entry name" value="a domain/subunit of cytochrome bc1 complex (Ubiquinol-cytochrome c reductase)"/>
    <property type="match status" value="1"/>
</dbReference>
<dbReference type="SUPFAM" id="SSF81342">
    <property type="entry name" value="Transmembrane di-heme cytochromes"/>
    <property type="match status" value="1"/>
</dbReference>
<dbReference type="PROSITE" id="PS51003">
    <property type="entry name" value="CYTB_CTER"/>
    <property type="match status" value="1"/>
</dbReference>
<dbReference type="PROSITE" id="PS51002">
    <property type="entry name" value="CYTB_NTER"/>
    <property type="match status" value="1"/>
</dbReference>
<protein>
    <recommendedName>
        <fullName>Cytochrome b</fullName>
    </recommendedName>
    <alternativeName>
        <fullName>Complex III subunit 3</fullName>
    </alternativeName>
    <alternativeName>
        <fullName>Complex III subunit III</fullName>
    </alternativeName>
    <alternativeName>
        <fullName>Cytochrome b-c1 complex subunit 3</fullName>
    </alternativeName>
    <alternativeName>
        <fullName>Ubiquinol-cytochrome-c reductase complex cytochrome b subunit</fullName>
    </alternativeName>
</protein>
<gene>
    <name type="primary">MT-CYB</name>
    <name type="synonym">COB</name>
    <name type="synonym">CYTB</name>
    <name type="synonym">MTCYB</name>
</gene>
<feature type="chain" id="PRO_0000061087" description="Cytochrome b">
    <location>
        <begin position="1"/>
        <end position="379"/>
    </location>
</feature>
<feature type="transmembrane region" description="Helical" evidence="2">
    <location>
        <begin position="33"/>
        <end position="53"/>
    </location>
</feature>
<feature type="transmembrane region" description="Helical" evidence="2">
    <location>
        <begin position="77"/>
        <end position="98"/>
    </location>
</feature>
<feature type="transmembrane region" description="Helical" evidence="2">
    <location>
        <begin position="113"/>
        <end position="133"/>
    </location>
</feature>
<feature type="transmembrane region" description="Helical" evidence="2">
    <location>
        <begin position="178"/>
        <end position="198"/>
    </location>
</feature>
<feature type="transmembrane region" description="Helical" evidence="2">
    <location>
        <begin position="226"/>
        <end position="246"/>
    </location>
</feature>
<feature type="transmembrane region" description="Helical" evidence="2">
    <location>
        <begin position="288"/>
        <end position="308"/>
    </location>
</feature>
<feature type="transmembrane region" description="Helical" evidence="2">
    <location>
        <begin position="320"/>
        <end position="340"/>
    </location>
</feature>
<feature type="transmembrane region" description="Helical" evidence="2">
    <location>
        <begin position="347"/>
        <end position="367"/>
    </location>
</feature>
<feature type="binding site" description="axial binding residue" evidence="2">
    <location>
        <position position="83"/>
    </location>
    <ligand>
        <name>heme b</name>
        <dbReference type="ChEBI" id="CHEBI:60344"/>
        <label>b562</label>
    </ligand>
    <ligandPart>
        <name>Fe</name>
        <dbReference type="ChEBI" id="CHEBI:18248"/>
    </ligandPart>
</feature>
<feature type="binding site" description="axial binding residue" evidence="2">
    <location>
        <position position="97"/>
    </location>
    <ligand>
        <name>heme b</name>
        <dbReference type="ChEBI" id="CHEBI:60344"/>
        <label>b566</label>
    </ligand>
    <ligandPart>
        <name>Fe</name>
        <dbReference type="ChEBI" id="CHEBI:18248"/>
    </ligandPart>
</feature>
<feature type="binding site" description="axial binding residue" evidence="2">
    <location>
        <position position="182"/>
    </location>
    <ligand>
        <name>heme b</name>
        <dbReference type="ChEBI" id="CHEBI:60344"/>
        <label>b562</label>
    </ligand>
    <ligandPart>
        <name>Fe</name>
        <dbReference type="ChEBI" id="CHEBI:18248"/>
    </ligandPart>
</feature>
<feature type="binding site" description="axial binding residue" evidence="2">
    <location>
        <position position="196"/>
    </location>
    <ligand>
        <name>heme b</name>
        <dbReference type="ChEBI" id="CHEBI:60344"/>
        <label>b566</label>
    </ligand>
    <ligandPart>
        <name>Fe</name>
        <dbReference type="ChEBI" id="CHEBI:18248"/>
    </ligandPart>
</feature>
<feature type="binding site" evidence="2">
    <location>
        <position position="201"/>
    </location>
    <ligand>
        <name>a ubiquinone</name>
        <dbReference type="ChEBI" id="CHEBI:16389"/>
    </ligand>
</feature>